<protein>
    <recommendedName>
        <fullName evidence="1">Urease subunit beta</fullName>
        <ecNumber evidence="1">3.5.1.5</ecNumber>
    </recommendedName>
    <alternativeName>
        <fullName evidence="1">Urea amidohydrolase subunit beta</fullName>
    </alternativeName>
</protein>
<name>URE2_BORPE</name>
<dbReference type="EC" id="3.5.1.5" evidence="1"/>
<dbReference type="EMBL" id="BX640420">
    <property type="protein sequence ID" value="CAE43437.1"/>
    <property type="molecule type" value="Genomic_DNA"/>
</dbReference>
<dbReference type="RefSeq" id="NP_881731.1">
    <property type="nucleotide sequence ID" value="NC_002929.2"/>
</dbReference>
<dbReference type="RefSeq" id="WP_010931338.1">
    <property type="nucleotide sequence ID" value="NZ_CP039022.1"/>
</dbReference>
<dbReference type="SMR" id="Q7VUD2"/>
<dbReference type="STRING" id="257313.BP3169"/>
<dbReference type="PaxDb" id="257313-BP3169"/>
<dbReference type="KEGG" id="bpe:BP3169"/>
<dbReference type="PATRIC" id="fig|257313.5.peg.3426"/>
<dbReference type="eggNOG" id="COG0832">
    <property type="taxonomic scope" value="Bacteria"/>
</dbReference>
<dbReference type="HOGENOM" id="CLU_129707_1_1_4"/>
<dbReference type="UniPathway" id="UPA00258">
    <property type="reaction ID" value="UER00370"/>
</dbReference>
<dbReference type="Proteomes" id="UP000002676">
    <property type="component" value="Chromosome"/>
</dbReference>
<dbReference type="GO" id="GO:0035550">
    <property type="term" value="C:urease complex"/>
    <property type="evidence" value="ECO:0007669"/>
    <property type="project" value="InterPro"/>
</dbReference>
<dbReference type="GO" id="GO:0009039">
    <property type="term" value="F:urease activity"/>
    <property type="evidence" value="ECO:0007669"/>
    <property type="project" value="UniProtKB-UniRule"/>
</dbReference>
<dbReference type="GO" id="GO:0043419">
    <property type="term" value="P:urea catabolic process"/>
    <property type="evidence" value="ECO:0007669"/>
    <property type="project" value="UniProtKB-UniRule"/>
</dbReference>
<dbReference type="CDD" id="cd00407">
    <property type="entry name" value="Urease_beta"/>
    <property type="match status" value="1"/>
</dbReference>
<dbReference type="FunFam" id="2.10.150.10:FF:000001">
    <property type="entry name" value="Urease subunit beta"/>
    <property type="match status" value="1"/>
</dbReference>
<dbReference type="Gene3D" id="2.10.150.10">
    <property type="entry name" value="Urease, beta subunit"/>
    <property type="match status" value="1"/>
</dbReference>
<dbReference type="HAMAP" id="MF_01954">
    <property type="entry name" value="Urease_beta"/>
    <property type="match status" value="1"/>
</dbReference>
<dbReference type="InterPro" id="IPR002019">
    <property type="entry name" value="Urease_beta-like"/>
</dbReference>
<dbReference type="InterPro" id="IPR036461">
    <property type="entry name" value="Urease_betasu_sf"/>
</dbReference>
<dbReference type="InterPro" id="IPR050069">
    <property type="entry name" value="Urease_subunit"/>
</dbReference>
<dbReference type="NCBIfam" id="NF009682">
    <property type="entry name" value="PRK13203.1"/>
    <property type="match status" value="1"/>
</dbReference>
<dbReference type="NCBIfam" id="TIGR00192">
    <property type="entry name" value="urease_beta"/>
    <property type="match status" value="1"/>
</dbReference>
<dbReference type="PANTHER" id="PTHR33569">
    <property type="entry name" value="UREASE"/>
    <property type="match status" value="1"/>
</dbReference>
<dbReference type="PANTHER" id="PTHR33569:SF1">
    <property type="entry name" value="UREASE"/>
    <property type="match status" value="1"/>
</dbReference>
<dbReference type="Pfam" id="PF00699">
    <property type="entry name" value="Urease_beta"/>
    <property type="match status" value="1"/>
</dbReference>
<dbReference type="SUPFAM" id="SSF51278">
    <property type="entry name" value="Urease, beta-subunit"/>
    <property type="match status" value="1"/>
</dbReference>
<gene>
    <name evidence="1" type="primary">ureB</name>
    <name type="ordered locus">BP3169</name>
</gene>
<keyword id="KW-0963">Cytoplasm</keyword>
<keyword id="KW-0378">Hydrolase</keyword>
<keyword id="KW-1185">Reference proteome</keyword>
<feature type="chain" id="PRO_0000234230" description="Urease subunit beta">
    <location>
        <begin position="1"/>
        <end position="102"/>
    </location>
</feature>
<sequence>MIPGEILTEPGQIELNVGRPTLTIAVVNEDDRPIQVGSHYHFAEANNALVFDRELATGYRLNIPAGNAVRFEPGMRRTVELVAVGGERRIFGFQGKVMGALK</sequence>
<proteinExistence type="inferred from homology"/>
<reference key="1">
    <citation type="journal article" date="2003" name="Nat. Genet.">
        <title>Comparative analysis of the genome sequences of Bordetella pertussis, Bordetella parapertussis and Bordetella bronchiseptica.</title>
        <authorList>
            <person name="Parkhill J."/>
            <person name="Sebaihia M."/>
            <person name="Preston A."/>
            <person name="Murphy L.D."/>
            <person name="Thomson N.R."/>
            <person name="Harris D.E."/>
            <person name="Holden M.T.G."/>
            <person name="Churcher C.M."/>
            <person name="Bentley S.D."/>
            <person name="Mungall K.L."/>
            <person name="Cerdeno-Tarraga A.-M."/>
            <person name="Temple L."/>
            <person name="James K.D."/>
            <person name="Harris B."/>
            <person name="Quail M.A."/>
            <person name="Achtman M."/>
            <person name="Atkin R."/>
            <person name="Baker S."/>
            <person name="Basham D."/>
            <person name="Bason N."/>
            <person name="Cherevach I."/>
            <person name="Chillingworth T."/>
            <person name="Collins M."/>
            <person name="Cronin A."/>
            <person name="Davis P."/>
            <person name="Doggett J."/>
            <person name="Feltwell T."/>
            <person name="Goble A."/>
            <person name="Hamlin N."/>
            <person name="Hauser H."/>
            <person name="Holroyd S."/>
            <person name="Jagels K."/>
            <person name="Leather S."/>
            <person name="Moule S."/>
            <person name="Norberczak H."/>
            <person name="O'Neil S."/>
            <person name="Ormond D."/>
            <person name="Price C."/>
            <person name="Rabbinowitsch E."/>
            <person name="Rutter S."/>
            <person name="Sanders M."/>
            <person name="Saunders D."/>
            <person name="Seeger K."/>
            <person name="Sharp S."/>
            <person name="Simmonds M."/>
            <person name="Skelton J."/>
            <person name="Squares R."/>
            <person name="Squares S."/>
            <person name="Stevens K."/>
            <person name="Unwin L."/>
            <person name="Whitehead S."/>
            <person name="Barrell B.G."/>
            <person name="Maskell D.J."/>
        </authorList>
    </citation>
    <scope>NUCLEOTIDE SEQUENCE [LARGE SCALE GENOMIC DNA]</scope>
    <source>
        <strain>Tohama I / ATCC BAA-589 / NCTC 13251</strain>
    </source>
</reference>
<comment type="catalytic activity">
    <reaction evidence="1">
        <text>urea + 2 H2O + H(+) = hydrogencarbonate + 2 NH4(+)</text>
        <dbReference type="Rhea" id="RHEA:20557"/>
        <dbReference type="ChEBI" id="CHEBI:15377"/>
        <dbReference type="ChEBI" id="CHEBI:15378"/>
        <dbReference type="ChEBI" id="CHEBI:16199"/>
        <dbReference type="ChEBI" id="CHEBI:17544"/>
        <dbReference type="ChEBI" id="CHEBI:28938"/>
        <dbReference type="EC" id="3.5.1.5"/>
    </reaction>
</comment>
<comment type="pathway">
    <text evidence="1">Nitrogen metabolism; urea degradation; CO(2) and NH(3) from urea (urease route): step 1/1.</text>
</comment>
<comment type="subunit">
    <text evidence="1">Heterotrimer of UreA (gamma), UreB (beta) and UreC (alpha) subunits. Three heterotrimers associate to form the active enzyme.</text>
</comment>
<comment type="subcellular location">
    <subcellularLocation>
        <location evidence="1">Cytoplasm</location>
    </subcellularLocation>
</comment>
<comment type="similarity">
    <text evidence="1">Belongs to the urease beta subunit family.</text>
</comment>
<organism>
    <name type="scientific">Bordetella pertussis (strain Tohama I / ATCC BAA-589 / NCTC 13251)</name>
    <dbReference type="NCBI Taxonomy" id="257313"/>
    <lineage>
        <taxon>Bacteria</taxon>
        <taxon>Pseudomonadati</taxon>
        <taxon>Pseudomonadota</taxon>
        <taxon>Betaproteobacteria</taxon>
        <taxon>Burkholderiales</taxon>
        <taxon>Alcaligenaceae</taxon>
        <taxon>Bordetella</taxon>
    </lineage>
</organism>
<evidence type="ECO:0000255" key="1">
    <source>
        <dbReference type="HAMAP-Rule" id="MF_01954"/>
    </source>
</evidence>
<accession>Q7VUD2</accession>